<organism>
    <name type="scientific">Enterobacter sp. (strain 638)</name>
    <dbReference type="NCBI Taxonomy" id="399742"/>
    <lineage>
        <taxon>Bacteria</taxon>
        <taxon>Pseudomonadati</taxon>
        <taxon>Pseudomonadota</taxon>
        <taxon>Gammaproteobacteria</taxon>
        <taxon>Enterobacterales</taxon>
        <taxon>Enterobacteriaceae</taxon>
        <taxon>Enterobacter</taxon>
    </lineage>
</organism>
<keyword id="KW-0456">Lyase</keyword>
<keyword id="KW-0460">Magnesium</keyword>
<keyword id="KW-0474">Menaquinone biosynthesis</keyword>
<keyword id="KW-0479">Metal-binding</keyword>
<sequence>MRGAQVYRWQIPMDAGVVLRDRRLKTRDGLFVHLQQDDRQGWGEISPLPGFSLESLAEAEAALLAWVNAWRIGESPALPAIPSAAFGISCALAELDGTLPEAADYRAAPLCSGDPDELFESLAAMPGEKIAKVKVGLYEAVRDGMVVNLLLEAIPDLRLRLDANRAWTPLKAQQFAKYVNPDYRDRIAFLEEPCKSRDDSRAFAQETGIAIAWDESLREAGFEFVAEPGVTALVIKPTLTGSLDKVREQVAAAHALGLTAVISSSIESSLGLTQLARIAAWLTPQTIPGLDTLNLMQSQLVRRWPGNPLPYLDIEALEPLL</sequence>
<accession>A4WCP6</accession>
<name>MENC_ENT38</name>
<proteinExistence type="inferred from homology"/>
<reference key="1">
    <citation type="journal article" date="2010" name="PLoS Genet.">
        <title>Genome sequence of the plant growth promoting endophytic bacterium Enterobacter sp. 638.</title>
        <authorList>
            <person name="Taghavi S."/>
            <person name="van der Lelie D."/>
            <person name="Hoffman A."/>
            <person name="Zhang Y.B."/>
            <person name="Walla M.D."/>
            <person name="Vangronsveld J."/>
            <person name="Newman L."/>
            <person name="Monchy S."/>
        </authorList>
    </citation>
    <scope>NUCLEOTIDE SEQUENCE [LARGE SCALE GENOMIC DNA]</scope>
    <source>
        <strain>638</strain>
    </source>
</reference>
<feature type="chain" id="PRO_1000060378" description="o-succinylbenzoate synthase">
    <location>
        <begin position="1"/>
        <end position="321"/>
    </location>
</feature>
<feature type="active site" description="Proton donor" evidence="1">
    <location>
        <position position="134"/>
    </location>
</feature>
<feature type="active site" description="Proton acceptor" evidence="1">
    <location>
        <position position="236"/>
    </location>
</feature>
<feature type="binding site" evidence="1">
    <location>
        <position position="162"/>
    </location>
    <ligand>
        <name>Mg(2+)</name>
        <dbReference type="ChEBI" id="CHEBI:18420"/>
    </ligand>
</feature>
<feature type="binding site" evidence="1">
    <location>
        <position position="191"/>
    </location>
    <ligand>
        <name>Mg(2+)</name>
        <dbReference type="ChEBI" id="CHEBI:18420"/>
    </ligand>
</feature>
<feature type="binding site" evidence="1">
    <location>
        <position position="214"/>
    </location>
    <ligand>
        <name>Mg(2+)</name>
        <dbReference type="ChEBI" id="CHEBI:18420"/>
    </ligand>
</feature>
<gene>
    <name evidence="1" type="primary">menC</name>
    <name type="ordered locus">Ent638_2811</name>
</gene>
<comment type="function">
    <text evidence="1">Converts 2-succinyl-6-hydroxy-2,4-cyclohexadiene-1-carboxylate (SHCHC) to 2-succinylbenzoate (OSB).</text>
</comment>
<comment type="catalytic activity">
    <reaction evidence="1">
        <text>(1R,6R)-6-hydroxy-2-succinyl-cyclohexa-2,4-diene-1-carboxylate = 2-succinylbenzoate + H2O</text>
        <dbReference type="Rhea" id="RHEA:10196"/>
        <dbReference type="ChEBI" id="CHEBI:15377"/>
        <dbReference type="ChEBI" id="CHEBI:18325"/>
        <dbReference type="ChEBI" id="CHEBI:58689"/>
        <dbReference type="EC" id="4.2.1.113"/>
    </reaction>
</comment>
<comment type="cofactor">
    <cofactor evidence="1">
        <name>a divalent metal cation</name>
        <dbReference type="ChEBI" id="CHEBI:60240"/>
    </cofactor>
</comment>
<comment type="pathway">
    <text evidence="1">Quinol/quinone metabolism; 1,4-dihydroxy-2-naphthoate biosynthesis; 1,4-dihydroxy-2-naphthoate from chorismate: step 4/7.</text>
</comment>
<comment type="pathway">
    <text evidence="1">Quinol/quinone metabolism; menaquinone biosynthesis.</text>
</comment>
<comment type="similarity">
    <text evidence="1">Belongs to the mandelate racemase/muconate lactonizing enzyme family. MenC type 1 subfamily.</text>
</comment>
<evidence type="ECO:0000255" key="1">
    <source>
        <dbReference type="HAMAP-Rule" id="MF_00470"/>
    </source>
</evidence>
<dbReference type="EC" id="4.2.1.113" evidence="1"/>
<dbReference type="EMBL" id="CP000653">
    <property type="protein sequence ID" value="ABP61476.1"/>
    <property type="molecule type" value="Genomic_DNA"/>
</dbReference>
<dbReference type="RefSeq" id="WP_015959809.1">
    <property type="nucleotide sequence ID" value="NC_009436.1"/>
</dbReference>
<dbReference type="SMR" id="A4WCP6"/>
<dbReference type="STRING" id="399742.Ent638_2811"/>
<dbReference type="KEGG" id="ent:Ent638_2811"/>
<dbReference type="eggNOG" id="COG1441">
    <property type="taxonomic scope" value="Bacteria"/>
</dbReference>
<dbReference type="HOGENOM" id="CLU_030273_0_1_6"/>
<dbReference type="OrthoDB" id="3725747at2"/>
<dbReference type="UniPathway" id="UPA00079"/>
<dbReference type="UniPathway" id="UPA01057">
    <property type="reaction ID" value="UER00165"/>
</dbReference>
<dbReference type="Proteomes" id="UP000000230">
    <property type="component" value="Chromosome"/>
</dbReference>
<dbReference type="GO" id="GO:0000287">
    <property type="term" value="F:magnesium ion binding"/>
    <property type="evidence" value="ECO:0007669"/>
    <property type="project" value="UniProtKB-UniRule"/>
</dbReference>
<dbReference type="GO" id="GO:0043748">
    <property type="term" value="F:O-succinylbenzoate synthase activity"/>
    <property type="evidence" value="ECO:0007669"/>
    <property type="project" value="UniProtKB-EC"/>
</dbReference>
<dbReference type="GO" id="GO:0009234">
    <property type="term" value="P:menaquinone biosynthetic process"/>
    <property type="evidence" value="ECO:0007669"/>
    <property type="project" value="UniProtKB-UniRule"/>
</dbReference>
<dbReference type="CDD" id="cd03320">
    <property type="entry name" value="OSBS"/>
    <property type="match status" value="1"/>
</dbReference>
<dbReference type="FunFam" id="3.20.20.120:FF:000006">
    <property type="entry name" value="o-succinylbenzoate synthase"/>
    <property type="match status" value="1"/>
</dbReference>
<dbReference type="Gene3D" id="3.20.20.120">
    <property type="entry name" value="Enolase-like C-terminal domain"/>
    <property type="match status" value="1"/>
</dbReference>
<dbReference type="Gene3D" id="3.30.390.10">
    <property type="entry name" value="Enolase-like, N-terminal domain"/>
    <property type="match status" value="1"/>
</dbReference>
<dbReference type="HAMAP" id="MF_00470">
    <property type="entry name" value="MenC_1"/>
    <property type="match status" value="1"/>
</dbReference>
<dbReference type="InterPro" id="IPR036849">
    <property type="entry name" value="Enolase-like_C_sf"/>
</dbReference>
<dbReference type="InterPro" id="IPR029017">
    <property type="entry name" value="Enolase-like_N"/>
</dbReference>
<dbReference type="InterPro" id="IPR029065">
    <property type="entry name" value="Enolase_C-like"/>
</dbReference>
<dbReference type="InterPro" id="IPR013342">
    <property type="entry name" value="Mandelate_racemase_C"/>
</dbReference>
<dbReference type="InterPro" id="IPR010196">
    <property type="entry name" value="OSB_synthase_MenC1"/>
</dbReference>
<dbReference type="InterPro" id="IPR041338">
    <property type="entry name" value="OSBS_N"/>
</dbReference>
<dbReference type="NCBIfam" id="TIGR01927">
    <property type="entry name" value="menC_gam_Gplu"/>
    <property type="match status" value="1"/>
</dbReference>
<dbReference type="NCBIfam" id="NF003473">
    <property type="entry name" value="PRK05105.1"/>
    <property type="match status" value="1"/>
</dbReference>
<dbReference type="PANTHER" id="PTHR48073:SF2">
    <property type="entry name" value="O-SUCCINYLBENZOATE SYNTHASE"/>
    <property type="match status" value="1"/>
</dbReference>
<dbReference type="PANTHER" id="PTHR48073">
    <property type="entry name" value="O-SUCCINYLBENZOATE SYNTHASE-RELATED"/>
    <property type="match status" value="1"/>
</dbReference>
<dbReference type="Pfam" id="PF21508">
    <property type="entry name" value="MenC_N"/>
    <property type="match status" value="1"/>
</dbReference>
<dbReference type="Pfam" id="PF13378">
    <property type="entry name" value="MR_MLE_C"/>
    <property type="match status" value="1"/>
</dbReference>
<dbReference type="SFLD" id="SFLDS00001">
    <property type="entry name" value="Enolase"/>
    <property type="match status" value="1"/>
</dbReference>
<dbReference type="SFLD" id="SFLDF00009">
    <property type="entry name" value="o-succinylbenzoate_synthase"/>
    <property type="match status" value="1"/>
</dbReference>
<dbReference type="SMART" id="SM00922">
    <property type="entry name" value="MR_MLE"/>
    <property type="match status" value="1"/>
</dbReference>
<dbReference type="SUPFAM" id="SSF51604">
    <property type="entry name" value="Enolase C-terminal domain-like"/>
    <property type="match status" value="1"/>
</dbReference>
<dbReference type="SUPFAM" id="SSF54826">
    <property type="entry name" value="Enolase N-terminal domain-like"/>
    <property type="match status" value="1"/>
</dbReference>
<protein>
    <recommendedName>
        <fullName evidence="1">o-succinylbenzoate synthase</fullName>
        <shortName evidence="1">OSB synthase</shortName>
        <shortName evidence="1">OSBS</shortName>
        <ecNumber evidence="1">4.2.1.113</ecNumber>
    </recommendedName>
    <alternativeName>
        <fullName evidence="1">4-(2'-carboxyphenyl)-4-oxybutyric acid synthase</fullName>
    </alternativeName>
    <alternativeName>
        <fullName evidence="1">o-succinylbenzoic acid synthase</fullName>
    </alternativeName>
</protein>